<evidence type="ECO:0000250" key="1">
    <source>
        <dbReference type="UniProtKB" id="Q9P253"/>
    </source>
</evidence>
<evidence type="ECO:0000255" key="2"/>
<evidence type="ECO:0000269" key="3">
    <source>
    </source>
</evidence>
<evidence type="ECO:0000269" key="4">
    <source>
    </source>
</evidence>
<evidence type="ECO:0000269" key="5">
    <source>
    </source>
</evidence>
<evidence type="ECO:0000269" key="6">
    <source>
    </source>
</evidence>
<evidence type="ECO:0000269" key="7">
    <source>
    </source>
</evidence>
<evidence type="ECO:0000269" key="8">
    <source>
    </source>
</evidence>
<evidence type="ECO:0000305" key="9"/>
<name>VPS18_MOUSE</name>
<sequence>MASILDEYEDSLSRSAVLQTGCPSVGIPHSGYVSAHLEKEVPIFTKQRVDFTPSERITSLVVSCNQLCMSLGKDTLLRIDLGKASEPNRVELGRKDDAKVHKMFLDHTGSHLLVALSSTEVLYMNRNGQKARPLARWKGQLVESVGWNKAMGNESSTGPILVGTAQGQIFEAELSASEGGLFGPAPDLYFRPLYVLNEEGGPAPVCSLEAERGPDGRGFVIATTRQRLFQFIGRAVEDTEAQGFAGLFAAYTDHPPPFREFPSNLGYSELAFYTPKLRSAPRAFAWMMGDGVLYGSLDCGRPDSLLSEERVWEYPAGVGPGANPPLAIVLTQFHFLLLLADRVEAVCTLTGQVVLRDHFLEKFGPLRHMVKDSSTGHLWAYTERAVFRYHVQREARDVWRTYLDMNRFDLAKEYCRERPDCLDTVLAREADFCFRQHRYLESARCYALTQSYFEEIALKFLEARQEEALAEFLQRKLAGLKPTERTQATLLTTWLTELYLSRLGALQGDPDALTLYRDTRECFRTFLSSPRHKEWLFASRASIHELLASHGDTEHMVYFAVIMQDYERVVAYHCQHEAYEEALAVLARHRDPQLFYKFSPILIRHIPRQLVDAWIEMGSRLDARQLIPALVNYSQGGEAQQVSQAIRYMEFCVNVLGETEQAIHNYLLSLYARGQPASLLAYLEQAGASPHRVHYDLKYALRLCAEHGHHRACVHVYKVLELYEEAVDLALQVDVDLAKQCADLPEEDEELRKKLWLKIARHVVQEEEDVQTAMACLASCPLLKIEDVLPFFPDFVTIDHFKEAICSSLKAYNHHIQELQREMEEATASAQRIRRDLQELRGRYGTVEPQDKCSTCDFPLLNRPFYLFLCGHMFHADCLLQAVRPGLPAYKQARLEELQRKLGAAPPPTKGSVKAKEAEAGAAAVGPSREQLKADLDELVAAECVYCGELMIRSIDRPFIDPQRYEEEHLSWL</sequence>
<feature type="initiator methionine" description="Removed" evidence="1">
    <location>
        <position position="1"/>
    </location>
</feature>
<feature type="chain" id="PRO_0000055907" description="Vacuolar protein sorting-associated protein 18 homolog">
    <location>
        <begin position="2"/>
        <end position="973"/>
    </location>
</feature>
<feature type="repeat" description="CHCR">
    <location>
        <begin position="618"/>
        <end position="772"/>
    </location>
</feature>
<feature type="zinc finger region" description="RING-type">
    <location>
        <begin position="853"/>
        <end position="947"/>
    </location>
</feature>
<feature type="coiled-coil region" evidence="2">
    <location>
        <begin position="454"/>
        <end position="481"/>
    </location>
</feature>
<feature type="coiled-coil region" evidence="2">
    <location>
        <begin position="802"/>
        <end position="848"/>
    </location>
</feature>
<feature type="modified residue" description="N-acetylalanine" evidence="1">
    <location>
        <position position="2"/>
    </location>
</feature>
<feature type="modified residue" description="Phosphoserine" evidence="1">
    <location>
        <position position="3"/>
    </location>
</feature>
<feature type="modified residue" description="Phosphoserine" evidence="1">
    <location>
        <position position="11"/>
    </location>
</feature>
<feature type="modified residue" description="Phosphoserine" evidence="1">
    <location>
        <position position="13"/>
    </location>
</feature>
<feature type="modified residue" description="N6-acetyllysine" evidence="1">
    <location>
        <position position="362"/>
    </location>
</feature>
<feature type="modified residue" description="Phosphoserine" evidence="1">
    <location>
        <position position="689"/>
    </location>
</feature>
<feature type="modified residue" description="Phosphoserine" evidence="1">
    <location>
        <position position="912"/>
    </location>
</feature>
<feature type="sequence conflict" description="In Ref. 1; BAC28236." evidence="9" ref="1">
    <original>P</original>
    <variation>T</variation>
    <location>
        <position position="676"/>
    </location>
</feature>
<feature type="sequence conflict" description="In Ref. 1; BAC26302." evidence="9" ref="1">
    <original>E</original>
    <variation>G</variation>
    <location>
        <position position="943"/>
    </location>
</feature>
<protein>
    <recommendedName>
        <fullName>Vacuolar protein sorting-associated protein 18 homolog</fullName>
    </recommendedName>
</protein>
<comment type="function">
    <text evidence="1 3 6 7">Plays a role in vesicle-mediated protein trafficking to lysosomal compartments including the endocytic membrane transport and autophagic pathways. Believed to act as a core component of the putative HOPS and CORVET endosomal tethering complexes which are proposed to be involved in the Rab5-to-Rab7 endosome conversion probably implicating MON1A/B, and via binding SNAREs and SNARE complexes to mediate tethering and docking events during SNARE-mediated membrane fusion. The HOPS complex is proposed to be recruited to Rab7 on the late endosomal membrane and to regulate late endocytic, phagocytic and autophagic traffic towards lysosomes. The CORVET complex is proposed to function as a Rab5 effector to mediate early endosome fusion probably in specific endosome subpopulations (By similarity). Required for fusion of endosomes and autophagosomes with lysosomes (PubMed:14517315, PubMed:22854957). Involved in dendrite development of Pukinje cells (PubMed:22699122).</text>
</comment>
<comment type="subunit">
    <text evidence="1 4 5 8">Core component of at least two putative endosomal tethering complexes, the homotypic fusion and vacuole protein sorting (HOPS) complex and the class C core vacuole/endosome tethering (CORVET) complex. Their common core is composed of the class C Vps proteins VPS11, VPS16, VPS18 and VPS33A, which in HOPS further associates with VPS39 and VPS41 and in CORVET with VPS8 and TGFBRAP1. Interacts with RAB5C (PubMed:25266290). Interacts with HOOK1 (PubMed:14668490). Interacts with STX7, MON1B (By similarity). Associates with adaptor protein complex 3 (AP-3) and clathrin:AP-3 complexes (PubMed:21411634). Interacts with SYNPO2 (By similarity). Interacts with PLEKHM1 (By similarity).</text>
</comment>
<comment type="interaction">
    <interactant intactId="EBI-2527788">
        <id>Q8R307</id>
    </interactant>
    <interactant intactId="EBI-749080">
        <id>Q9H9C1</id>
        <label>VIPAS39</label>
    </interactant>
    <organismsDiffer>true</organismsDiffer>
    <experiments>5</experiments>
</comment>
<comment type="subcellular location">
    <subcellularLocation>
        <location evidence="1">Late endosome membrane</location>
        <topology evidence="1">Peripheral membrane protein</topology>
        <orientation evidence="1">Cytoplasmic side</orientation>
    </subcellularLocation>
    <subcellularLocation>
        <location evidence="1">Lysosome membrane</location>
        <topology evidence="1">Peripheral membrane protein</topology>
        <orientation evidence="1">Cytoplasmic side</orientation>
    </subcellularLocation>
    <subcellularLocation>
        <location evidence="1">Early endosome</location>
    </subcellularLocation>
    <subcellularLocation>
        <location evidence="9">Cytoplasmic vesicle</location>
        <location evidence="9">Autophagosome</location>
    </subcellularLocation>
    <subcellularLocation>
        <location evidence="9">Cytoplasmic vesicle</location>
        <location evidence="9">Clathrin-coated vesicle</location>
    </subcellularLocation>
    <text>Cytoplasmic, peripheral membrane protein associated with early endosomes and late endosomes/lysosomes.</text>
</comment>
<comment type="similarity">
    <text evidence="9">Belongs to the VPS18 family.</text>
</comment>
<proteinExistence type="evidence at protein level"/>
<organism>
    <name type="scientific">Mus musculus</name>
    <name type="common">Mouse</name>
    <dbReference type="NCBI Taxonomy" id="10090"/>
    <lineage>
        <taxon>Eukaryota</taxon>
        <taxon>Metazoa</taxon>
        <taxon>Chordata</taxon>
        <taxon>Craniata</taxon>
        <taxon>Vertebrata</taxon>
        <taxon>Euteleostomi</taxon>
        <taxon>Mammalia</taxon>
        <taxon>Eutheria</taxon>
        <taxon>Euarchontoglires</taxon>
        <taxon>Glires</taxon>
        <taxon>Rodentia</taxon>
        <taxon>Myomorpha</taxon>
        <taxon>Muroidea</taxon>
        <taxon>Muridae</taxon>
        <taxon>Murinae</taxon>
        <taxon>Mus</taxon>
        <taxon>Mus</taxon>
    </lineage>
</organism>
<gene>
    <name type="primary">Vps18</name>
</gene>
<dbReference type="EMBL" id="AK029109">
    <property type="protein sequence ID" value="BAC26302.1"/>
    <property type="molecule type" value="mRNA"/>
</dbReference>
<dbReference type="EMBL" id="AK033333">
    <property type="protein sequence ID" value="BAC28236.1"/>
    <property type="molecule type" value="mRNA"/>
</dbReference>
<dbReference type="EMBL" id="AK036915">
    <property type="protein sequence ID" value="BAC29637.1"/>
    <property type="molecule type" value="mRNA"/>
</dbReference>
<dbReference type="EMBL" id="BC026870">
    <property type="protein sequence ID" value="AAH26870.1"/>
    <property type="molecule type" value="mRNA"/>
</dbReference>
<dbReference type="EMBL" id="BC036129">
    <property type="protein sequence ID" value="AAH36129.1"/>
    <property type="molecule type" value="mRNA"/>
</dbReference>
<dbReference type="EMBL" id="BC039176">
    <property type="protein sequence ID" value="AAH39176.1"/>
    <property type="molecule type" value="mRNA"/>
</dbReference>
<dbReference type="CCDS" id="CCDS16599.1"/>
<dbReference type="RefSeq" id="NP_758473.3">
    <property type="nucleotide sequence ID" value="NM_172269.3"/>
</dbReference>
<dbReference type="SMR" id="Q8R307"/>
<dbReference type="BioGRID" id="230740">
    <property type="interactions" value="21"/>
</dbReference>
<dbReference type="FunCoup" id="Q8R307">
    <property type="interactions" value="3315"/>
</dbReference>
<dbReference type="IntAct" id="Q8R307">
    <property type="interactions" value="5"/>
</dbReference>
<dbReference type="MINT" id="Q8R307"/>
<dbReference type="STRING" id="10090.ENSMUSP00000036915"/>
<dbReference type="GlyGen" id="Q8R307">
    <property type="glycosylation" value="1 site, 1 O-linked glycan (1 site)"/>
</dbReference>
<dbReference type="iPTMnet" id="Q8R307"/>
<dbReference type="PhosphoSitePlus" id="Q8R307"/>
<dbReference type="SwissPalm" id="Q8R307"/>
<dbReference type="jPOST" id="Q8R307"/>
<dbReference type="PaxDb" id="10090-ENSMUSP00000036915"/>
<dbReference type="PeptideAtlas" id="Q8R307"/>
<dbReference type="ProteomicsDB" id="297582"/>
<dbReference type="Pumba" id="Q8R307"/>
<dbReference type="Antibodypedia" id="23197">
    <property type="antibodies" value="162 antibodies from 24 providers"/>
</dbReference>
<dbReference type="DNASU" id="228545"/>
<dbReference type="Ensembl" id="ENSMUST00000037280.5">
    <property type="protein sequence ID" value="ENSMUSP00000036915.5"/>
    <property type="gene ID" value="ENSMUSG00000034216.13"/>
</dbReference>
<dbReference type="GeneID" id="228545"/>
<dbReference type="KEGG" id="mmu:228545"/>
<dbReference type="UCSC" id="uc008lto.2">
    <property type="organism name" value="mouse"/>
</dbReference>
<dbReference type="AGR" id="MGI:2443626"/>
<dbReference type="CTD" id="57617"/>
<dbReference type="MGI" id="MGI:2443626">
    <property type="gene designation" value="Vps18"/>
</dbReference>
<dbReference type="VEuPathDB" id="HostDB:ENSMUSG00000034216"/>
<dbReference type="eggNOG" id="KOG2034">
    <property type="taxonomic scope" value="Eukaryota"/>
</dbReference>
<dbReference type="GeneTree" id="ENSGT00940000153635"/>
<dbReference type="HOGENOM" id="CLU_003488_1_0_1"/>
<dbReference type="InParanoid" id="Q8R307"/>
<dbReference type="OMA" id="WIQREKW"/>
<dbReference type="OrthoDB" id="1845386at2759"/>
<dbReference type="PhylomeDB" id="Q8R307"/>
<dbReference type="TreeFam" id="TF105704"/>
<dbReference type="BioGRID-ORCS" id="228545">
    <property type="hits" value="24 hits in 80 CRISPR screens"/>
</dbReference>
<dbReference type="CD-CODE" id="CE726F99">
    <property type="entry name" value="Postsynaptic density"/>
</dbReference>
<dbReference type="ChiTaRS" id="Vps18">
    <property type="organism name" value="mouse"/>
</dbReference>
<dbReference type="PRO" id="PR:Q8R307"/>
<dbReference type="Proteomes" id="UP000000589">
    <property type="component" value="Chromosome 2"/>
</dbReference>
<dbReference type="RNAct" id="Q8R307">
    <property type="molecule type" value="protein"/>
</dbReference>
<dbReference type="Bgee" id="ENSMUSG00000034216">
    <property type="expression patterns" value="Expressed in ankle joint and 177 other cell types or tissues"/>
</dbReference>
<dbReference type="GO" id="GO:0005884">
    <property type="term" value="C:actin filament"/>
    <property type="evidence" value="ECO:0000314"/>
    <property type="project" value="MGI"/>
</dbReference>
<dbReference type="GO" id="GO:0005776">
    <property type="term" value="C:autophagosome"/>
    <property type="evidence" value="ECO:0007669"/>
    <property type="project" value="UniProtKB-SubCell"/>
</dbReference>
<dbReference type="GO" id="GO:0030136">
    <property type="term" value="C:clathrin-coated vesicle"/>
    <property type="evidence" value="ECO:0007669"/>
    <property type="project" value="UniProtKB-SubCell"/>
</dbReference>
<dbReference type="GO" id="GO:0033263">
    <property type="term" value="C:CORVET complex"/>
    <property type="evidence" value="ECO:0000314"/>
    <property type="project" value="UniProtKB"/>
</dbReference>
<dbReference type="GO" id="GO:0005769">
    <property type="term" value="C:early endosome"/>
    <property type="evidence" value="ECO:0000314"/>
    <property type="project" value="MGI"/>
</dbReference>
<dbReference type="GO" id="GO:0098978">
    <property type="term" value="C:glutamatergic synapse"/>
    <property type="evidence" value="ECO:0007669"/>
    <property type="project" value="Ensembl"/>
</dbReference>
<dbReference type="GO" id="GO:0030897">
    <property type="term" value="C:HOPS complex"/>
    <property type="evidence" value="ECO:0007669"/>
    <property type="project" value="Ensembl"/>
</dbReference>
<dbReference type="GO" id="GO:0031902">
    <property type="term" value="C:late endosome membrane"/>
    <property type="evidence" value="ECO:0007669"/>
    <property type="project" value="UniProtKB-SubCell"/>
</dbReference>
<dbReference type="GO" id="GO:0005765">
    <property type="term" value="C:lysosomal membrane"/>
    <property type="evidence" value="ECO:0007669"/>
    <property type="project" value="UniProtKB-SubCell"/>
</dbReference>
<dbReference type="GO" id="GO:0098793">
    <property type="term" value="C:presynapse"/>
    <property type="evidence" value="ECO:0007669"/>
    <property type="project" value="Ensembl"/>
</dbReference>
<dbReference type="GO" id="GO:0003779">
    <property type="term" value="F:actin binding"/>
    <property type="evidence" value="ECO:0000314"/>
    <property type="project" value="MGI"/>
</dbReference>
<dbReference type="GO" id="GO:0019905">
    <property type="term" value="F:syntaxin binding"/>
    <property type="evidence" value="ECO:0007669"/>
    <property type="project" value="Ensembl"/>
</dbReference>
<dbReference type="GO" id="GO:0061630">
    <property type="term" value="F:ubiquitin protein ligase activity"/>
    <property type="evidence" value="ECO:0007669"/>
    <property type="project" value="Ensembl"/>
</dbReference>
<dbReference type="GO" id="GO:0008270">
    <property type="term" value="F:zinc ion binding"/>
    <property type="evidence" value="ECO:0007669"/>
    <property type="project" value="UniProtKB-KW"/>
</dbReference>
<dbReference type="GO" id="GO:0006914">
    <property type="term" value="P:autophagy"/>
    <property type="evidence" value="ECO:0007669"/>
    <property type="project" value="UniProtKB-KW"/>
</dbReference>
<dbReference type="GO" id="GO:0007032">
    <property type="term" value="P:endosome organization"/>
    <property type="evidence" value="ECO:0000314"/>
    <property type="project" value="MGI"/>
</dbReference>
<dbReference type="GO" id="GO:0008333">
    <property type="term" value="P:endosome to lysosome transport"/>
    <property type="evidence" value="ECO:0007669"/>
    <property type="project" value="Ensembl"/>
</dbReference>
<dbReference type="GO" id="GO:0006886">
    <property type="term" value="P:intracellular protein transport"/>
    <property type="evidence" value="ECO:0007669"/>
    <property type="project" value="InterPro"/>
</dbReference>
<dbReference type="GO" id="GO:0007040">
    <property type="term" value="P:lysosome organization"/>
    <property type="evidence" value="ECO:0007669"/>
    <property type="project" value="Ensembl"/>
</dbReference>
<dbReference type="GO" id="GO:0033147">
    <property type="term" value="P:negative regulation of intracellular estrogen receptor signaling pathway"/>
    <property type="evidence" value="ECO:0007669"/>
    <property type="project" value="Ensembl"/>
</dbReference>
<dbReference type="GO" id="GO:0016567">
    <property type="term" value="P:protein ubiquitination"/>
    <property type="evidence" value="ECO:0007669"/>
    <property type="project" value="Ensembl"/>
</dbReference>
<dbReference type="GO" id="GO:2000300">
    <property type="term" value="P:regulation of synaptic vesicle exocytosis"/>
    <property type="evidence" value="ECO:0007669"/>
    <property type="project" value="Ensembl"/>
</dbReference>
<dbReference type="GO" id="GO:0046718">
    <property type="term" value="P:symbiont entry into host cell"/>
    <property type="evidence" value="ECO:0000315"/>
    <property type="project" value="MGI"/>
</dbReference>
<dbReference type="CDD" id="cd16689">
    <property type="entry name" value="RING-H2_Vps18"/>
    <property type="match status" value="1"/>
</dbReference>
<dbReference type="InterPro" id="IPR000547">
    <property type="entry name" value="Clathrin_H-chain/VPS_repeat"/>
</dbReference>
<dbReference type="InterPro" id="IPR007810">
    <property type="entry name" value="Pep3_Vps18"/>
</dbReference>
<dbReference type="PANTHER" id="PTHR23323">
    <property type="entry name" value="VACUOLAR PROTEIN SORTING-ASSOCIATED PROTEIN"/>
    <property type="match status" value="1"/>
</dbReference>
<dbReference type="PANTHER" id="PTHR23323:SF26">
    <property type="entry name" value="VACUOLAR PROTEIN SORTING-ASSOCIATED PROTEIN 18 HOMOLOG"/>
    <property type="match status" value="1"/>
</dbReference>
<dbReference type="Pfam" id="PF05131">
    <property type="entry name" value="Pep3_Vps18"/>
    <property type="match status" value="1"/>
</dbReference>
<dbReference type="PROSITE" id="PS50236">
    <property type="entry name" value="CHCR"/>
    <property type="match status" value="1"/>
</dbReference>
<reference key="1">
    <citation type="journal article" date="2005" name="Science">
        <title>The transcriptional landscape of the mammalian genome.</title>
        <authorList>
            <person name="Carninci P."/>
            <person name="Kasukawa T."/>
            <person name="Katayama S."/>
            <person name="Gough J."/>
            <person name="Frith M.C."/>
            <person name="Maeda N."/>
            <person name="Oyama R."/>
            <person name="Ravasi T."/>
            <person name="Lenhard B."/>
            <person name="Wells C."/>
            <person name="Kodzius R."/>
            <person name="Shimokawa K."/>
            <person name="Bajic V.B."/>
            <person name="Brenner S.E."/>
            <person name="Batalov S."/>
            <person name="Forrest A.R."/>
            <person name="Zavolan M."/>
            <person name="Davis M.J."/>
            <person name="Wilming L.G."/>
            <person name="Aidinis V."/>
            <person name="Allen J.E."/>
            <person name="Ambesi-Impiombato A."/>
            <person name="Apweiler R."/>
            <person name="Aturaliya R.N."/>
            <person name="Bailey T.L."/>
            <person name="Bansal M."/>
            <person name="Baxter L."/>
            <person name="Beisel K.W."/>
            <person name="Bersano T."/>
            <person name="Bono H."/>
            <person name="Chalk A.M."/>
            <person name="Chiu K.P."/>
            <person name="Choudhary V."/>
            <person name="Christoffels A."/>
            <person name="Clutterbuck D.R."/>
            <person name="Crowe M.L."/>
            <person name="Dalla E."/>
            <person name="Dalrymple B.P."/>
            <person name="de Bono B."/>
            <person name="Della Gatta G."/>
            <person name="di Bernardo D."/>
            <person name="Down T."/>
            <person name="Engstrom P."/>
            <person name="Fagiolini M."/>
            <person name="Faulkner G."/>
            <person name="Fletcher C.F."/>
            <person name="Fukushima T."/>
            <person name="Furuno M."/>
            <person name="Futaki S."/>
            <person name="Gariboldi M."/>
            <person name="Georgii-Hemming P."/>
            <person name="Gingeras T.R."/>
            <person name="Gojobori T."/>
            <person name="Green R.E."/>
            <person name="Gustincich S."/>
            <person name="Harbers M."/>
            <person name="Hayashi Y."/>
            <person name="Hensch T.K."/>
            <person name="Hirokawa N."/>
            <person name="Hill D."/>
            <person name="Huminiecki L."/>
            <person name="Iacono M."/>
            <person name="Ikeo K."/>
            <person name="Iwama A."/>
            <person name="Ishikawa T."/>
            <person name="Jakt M."/>
            <person name="Kanapin A."/>
            <person name="Katoh M."/>
            <person name="Kawasawa Y."/>
            <person name="Kelso J."/>
            <person name="Kitamura H."/>
            <person name="Kitano H."/>
            <person name="Kollias G."/>
            <person name="Krishnan S.P."/>
            <person name="Kruger A."/>
            <person name="Kummerfeld S.K."/>
            <person name="Kurochkin I.V."/>
            <person name="Lareau L.F."/>
            <person name="Lazarevic D."/>
            <person name="Lipovich L."/>
            <person name="Liu J."/>
            <person name="Liuni S."/>
            <person name="McWilliam S."/>
            <person name="Madan Babu M."/>
            <person name="Madera M."/>
            <person name="Marchionni L."/>
            <person name="Matsuda H."/>
            <person name="Matsuzawa S."/>
            <person name="Miki H."/>
            <person name="Mignone F."/>
            <person name="Miyake S."/>
            <person name="Morris K."/>
            <person name="Mottagui-Tabar S."/>
            <person name="Mulder N."/>
            <person name="Nakano N."/>
            <person name="Nakauchi H."/>
            <person name="Ng P."/>
            <person name="Nilsson R."/>
            <person name="Nishiguchi S."/>
            <person name="Nishikawa S."/>
            <person name="Nori F."/>
            <person name="Ohara O."/>
            <person name="Okazaki Y."/>
            <person name="Orlando V."/>
            <person name="Pang K.C."/>
            <person name="Pavan W.J."/>
            <person name="Pavesi G."/>
            <person name="Pesole G."/>
            <person name="Petrovsky N."/>
            <person name="Piazza S."/>
            <person name="Reed J."/>
            <person name="Reid J.F."/>
            <person name="Ring B.Z."/>
            <person name="Ringwald M."/>
            <person name="Rost B."/>
            <person name="Ruan Y."/>
            <person name="Salzberg S.L."/>
            <person name="Sandelin A."/>
            <person name="Schneider C."/>
            <person name="Schoenbach C."/>
            <person name="Sekiguchi K."/>
            <person name="Semple C.A."/>
            <person name="Seno S."/>
            <person name="Sessa L."/>
            <person name="Sheng Y."/>
            <person name="Shibata Y."/>
            <person name="Shimada H."/>
            <person name="Shimada K."/>
            <person name="Silva D."/>
            <person name="Sinclair B."/>
            <person name="Sperling S."/>
            <person name="Stupka E."/>
            <person name="Sugiura K."/>
            <person name="Sultana R."/>
            <person name="Takenaka Y."/>
            <person name="Taki K."/>
            <person name="Tammoja K."/>
            <person name="Tan S.L."/>
            <person name="Tang S."/>
            <person name="Taylor M.S."/>
            <person name="Tegner J."/>
            <person name="Teichmann S.A."/>
            <person name="Ueda H.R."/>
            <person name="van Nimwegen E."/>
            <person name="Verardo R."/>
            <person name="Wei C.L."/>
            <person name="Yagi K."/>
            <person name="Yamanishi H."/>
            <person name="Zabarovsky E."/>
            <person name="Zhu S."/>
            <person name="Zimmer A."/>
            <person name="Hide W."/>
            <person name="Bult C."/>
            <person name="Grimmond S.M."/>
            <person name="Teasdale R.D."/>
            <person name="Liu E.T."/>
            <person name="Brusic V."/>
            <person name="Quackenbush J."/>
            <person name="Wahlestedt C."/>
            <person name="Mattick J.S."/>
            <person name="Hume D.A."/>
            <person name="Kai C."/>
            <person name="Sasaki D."/>
            <person name="Tomaru Y."/>
            <person name="Fukuda S."/>
            <person name="Kanamori-Katayama M."/>
            <person name="Suzuki M."/>
            <person name="Aoki J."/>
            <person name="Arakawa T."/>
            <person name="Iida J."/>
            <person name="Imamura K."/>
            <person name="Itoh M."/>
            <person name="Kato T."/>
            <person name="Kawaji H."/>
            <person name="Kawagashira N."/>
            <person name="Kawashima T."/>
            <person name="Kojima M."/>
            <person name="Kondo S."/>
            <person name="Konno H."/>
            <person name="Nakano K."/>
            <person name="Ninomiya N."/>
            <person name="Nishio T."/>
            <person name="Okada M."/>
            <person name="Plessy C."/>
            <person name="Shibata K."/>
            <person name="Shiraki T."/>
            <person name="Suzuki S."/>
            <person name="Tagami M."/>
            <person name="Waki K."/>
            <person name="Watahiki A."/>
            <person name="Okamura-Oho Y."/>
            <person name="Suzuki H."/>
            <person name="Kawai J."/>
            <person name="Hayashizaki Y."/>
        </authorList>
    </citation>
    <scope>NUCLEOTIDE SEQUENCE [LARGE SCALE MRNA]</scope>
    <source>
        <strain>C57BL/6J</strain>
        <tissue>Skin</tissue>
        <tissue>Testis</tissue>
        <tissue>Vagina</tissue>
    </source>
</reference>
<reference key="2">
    <citation type="journal article" date="2004" name="Genome Res.">
        <title>The status, quality, and expansion of the NIH full-length cDNA project: the Mammalian Gene Collection (MGC).</title>
        <authorList>
            <consortium name="The MGC Project Team"/>
        </authorList>
    </citation>
    <scope>NUCLEOTIDE SEQUENCE [LARGE SCALE MRNA]</scope>
    <source>
        <strain>FVB/N</strain>
        <tissue>Kidney</tissue>
        <tissue>Mammary tumor</tissue>
    </source>
</reference>
<reference key="3">
    <citation type="journal article" date="2003" name="Mol. Biol. Cell">
        <title>The role of mVps18p in clustering, fusion, and intracellular localization of late endocytic organelles.</title>
        <authorList>
            <person name="Poupon V."/>
            <person name="Stewart A."/>
            <person name="Gray S.R."/>
            <person name="Piper R.C."/>
            <person name="Luzio J.P."/>
        </authorList>
    </citation>
    <scope>FUNCTION</scope>
</reference>
<reference key="4">
    <citation type="journal article" date="2004" name="Mol. Biol. Cell">
        <title>Mammalian late vacuole protein sorting orthologues participate in early endosomal fusion and interact with the cytoskeleton.</title>
        <authorList>
            <person name="Richardson S.C.W."/>
            <person name="Winistorfer S.C."/>
            <person name="Poupon V."/>
            <person name="Luzio J.P."/>
            <person name="Piper R.C."/>
        </authorList>
    </citation>
    <scope>INTERACTION WITH HOOK1</scope>
</reference>
<reference key="5">
    <citation type="journal article" date="2010" name="Cell">
        <title>A tissue-specific atlas of mouse protein phosphorylation and expression.</title>
        <authorList>
            <person name="Huttlin E.L."/>
            <person name="Jedrychowski M.P."/>
            <person name="Elias J.E."/>
            <person name="Goswami T."/>
            <person name="Rad R."/>
            <person name="Beausoleil S.A."/>
            <person name="Villen J."/>
            <person name="Haas W."/>
            <person name="Sowa M.E."/>
            <person name="Gygi S.P."/>
        </authorList>
    </citation>
    <scope>IDENTIFICATION BY MASS SPECTROMETRY [LARGE SCALE ANALYSIS]</scope>
    <source>
        <tissue>Brain</tissue>
        <tissue>Brown adipose tissue</tissue>
        <tissue>Heart</tissue>
        <tissue>Kidney</tissue>
        <tissue>Liver</tissue>
        <tissue>Lung</tissue>
        <tissue>Spleen</tissue>
        <tissue>Testis</tissue>
    </source>
</reference>
<reference key="6">
    <citation type="journal article" date="2011" name="Mol. Biol. Cell">
        <title>Clathrin-dependent mechanisms modulate the subcellular distribution of class C Vps/HOPS tether subunits in polarized and nonpolarized cells.</title>
        <authorList>
            <person name="Zlatic S.A."/>
            <person name="Tornieri K."/>
            <person name="L'Hernault S.W."/>
            <person name="Faundez V."/>
        </authorList>
    </citation>
    <scope>SUBUNIT</scope>
</reference>
<reference key="7">
    <citation type="journal article" date="2012" name="Biochem. Biophys. Res. Commun.">
        <title>Vps18 deficiency inhibits dendritogenesis in Purkinje cells by blocking the lysosomal degradation of Lysyl Oxidase.</title>
        <authorList>
            <person name="Peng C."/>
            <person name="Yan S."/>
            <person name="Ye J."/>
            <person name="Shen L."/>
            <person name="Xu T."/>
            <person name="Tao W."/>
        </authorList>
    </citation>
    <scope>FUNCTION</scope>
</reference>
<reference key="8">
    <citation type="journal article" date="2012" name="J. Biol. Chem.">
        <title>Ablation of vacuole protein sorting 18 (Vps18) gene leads to neurodegeneration and impaired neuronal migration by disrupting multiple vesicle transport pathways to lysosomes.</title>
        <authorList>
            <person name="Peng C."/>
            <person name="Ye J."/>
            <person name="Yan S."/>
            <person name="Kong S."/>
            <person name="Shen Y."/>
            <person name="Li C."/>
            <person name="Li Q."/>
            <person name="Zheng Y."/>
            <person name="Deng K."/>
            <person name="Xu T."/>
            <person name="Tao W."/>
        </authorList>
    </citation>
    <scope>FUNCTION</scope>
</reference>
<reference key="9">
    <citation type="journal article" date="2014" name="Traffic">
        <title>Mammalian CORVET is required for fusion and conversion of distinct early endosome subpopulations.</title>
        <authorList>
            <person name="Perini E.D."/>
            <person name="Schaefer R."/>
            <person name="Stoeter M."/>
            <person name="Kalaidzidis Y."/>
            <person name="Zerial M."/>
        </authorList>
    </citation>
    <scope>SUBUNIT</scope>
    <scope>INTERACTION WITH RAB5C</scope>
</reference>
<keyword id="KW-0007">Acetylation</keyword>
<keyword id="KW-0072">Autophagy</keyword>
<keyword id="KW-0175">Coiled coil</keyword>
<keyword id="KW-0968">Cytoplasmic vesicle</keyword>
<keyword id="KW-0967">Endosome</keyword>
<keyword id="KW-0458">Lysosome</keyword>
<keyword id="KW-0472">Membrane</keyword>
<keyword id="KW-0479">Metal-binding</keyword>
<keyword id="KW-0597">Phosphoprotein</keyword>
<keyword id="KW-0653">Protein transport</keyword>
<keyword id="KW-1185">Reference proteome</keyword>
<keyword id="KW-0813">Transport</keyword>
<keyword id="KW-0862">Zinc</keyword>
<keyword id="KW-0863">Zinc-finger</keyword>
<accession>Q8R307</accession>
<accession>Q8BGV6</accession>
<accession>Q8BZX6</accession>
<accession>Q8C126</accession>